<keyword id="KW-0284">Flavonoid biosynthesis</keyword>
<keyword id="KW-0413">Isomerase</keyword>
<sequence>MSPSQSPSVAQVQIESHVFPPTVKPPGTSKPFFLGGAGERGLEIQGKFIKFTAIGVYLEDSAIPSLAVKWKGKTAEELTDSVDFFRDIVSGPFEKFTQVTMILPLTGQQYSEKVTENCVAYWKAVGTYTDAEAKAIEKFIEVFKDETFPPGGSILFTQSPLGSLTIAFSKDGSLPETGTVVMENKQLSEAVLESIIGKHGVSPAAKKSLAARMSELLKEKPEAQTAAAAE</sequence>
<accession>Q45QI7</accession>
<feature type="chain" id="PRO_0000300832" description="Chalcone--flavanone isomerase">
    <location>
        <begin position="1"/>
        <end position="230"/>
    </location>
</feature>
<feature type="binding site" evidence="1">
    <location>
        <position position="52"/>
    </location>
    <ligand>
        <name>substrate</name>
    </ligand>
</feature>
<feature type="binding site" evidence="1">
    <location>
        <position position="117"/>
    </location>
    <ligand>
        <name>substrate</name>
    </ligand>
</feature>
<feature type="binding site" evidence="1">
    <location>
        <position position="194"/>
    </location>
    <ligand>
        <name>substrate</name>
    </ligand>
</feature>
<feature type="site" description="Important for catalytic activity" evidence="1">
    <location>
        <position position="110"/>
    </location>
</feature>
<comment type="function">
    <text evidence="1">Catalyzes the intramolecular cyclization of bicyclic chalcones into tricyclic (S)-flavanones. Responsible for the isomerization of 4,2',4',6'-tetrahydroxychalcone (also termed chalcone) into naringenin (By similarity).</text>
</comment>
<comment type="catalytic activity">
    <reaction>
        <text>a chalcone = a flavanone.</text>
        <dbReference type="EC" id="5.5.1.6"/>
    </reaction>
</comment>
<comment type="pathway">
    <text>Secondary metabolite biosynthesis; flavonoid biosynthesis.</text>
</comment>
<comment type="miscellaneous">
    <text>Part of the biosynthetic pathway for all classes of flavonoids, a large class of secondary plant metabolites, many of which are brightly colored.</text>
</comment>
<comment type="similarity">
    <text evidence="2">Belongs to the chalcone isomerase family.</text>
</comment>
<name>CFI_CAMSI</name>
<gene>
    <name type="primary">CHI</name>
</gene>
<evidence type="ECO:0000250" key="1"/>
<evidence type="ECO:0000305" key="2"/>
<protein>
    <recommendedName>
        <fullName>Chalcone--flavanone isomerase</fullName>
        <shortName>Chalcone isomerase</shortName>
        <ecNumber>5.5.1.6</ecNumber>
    </recommendedName>
</protein>
<organism>
    <name type="scientific">Camellia sinensis</name>
    <name type="common">Tea plant</name>
    <name type="synonym">Thea sinensis</name>
    <dbReference type="NCBI Taxonomy" id="4442"/>
    <lineage>
        <taxon>Eukaryota</taxon>
        <taxon>Viridiplantae</taxon>
        <taxon>Streptophyta</taxon>
        <taxon>Embryophyta</taxon>
        <taxon>Tracheophyta</taxon>
        <taxon>Spermatophyta</taxon>
        <taxon>Magnoliopsida</taxon>
        <taxon>eudicotyledons</taxon>
        <taxon>Gunneridae</taxon>
        <taxon>Pentapetalae</taxon>
        <taxon>asterids</taxon>
        <taxon>Ericales</taxon>
        <taxon>Theaceae</taxon>
        <taxon>Camellia</taxon>
    </lineage>
</organism>
<proteinExistence type="evidence at transcript level"/>
<dbReference type="EC" id="5.5.1.6"/>
<dbReference type="EMBL" id="DQ120521">
    <property type="protein sequence ID" value="AAZ17563.2"/>
    <property type="molecule type" value="mRNA"/>
</dbReference>
<dbReference type="SMR" id="Q45QI7"/>
<dbReference type="UniPathway" id="UPA00154"/>
<dbReference type="GO" id="GO:0045430">
    <property type="term" value="F:chalcone isomerase activity"/>
    <property type="evidence" value="ECO:0007669"/>
    <property type="project" value="UniProtKB-EC"/>
</dbReference>
<dbReference type="GO" id="GO:0009813">
    <property type="term" value="P:flavonoid biosynthetic process"/>
    <property type="evidence" value="ECO:0007669"/>
    <property type="project" value="UniProtKB-UniPathway"/>
</dbReference>
<dbReference type="Gene3D" id="1.10.890.20">
    <property type="match status" value="1"/>
</dbReference>
<dbReference type="Gene3D" id="3.50.70.10">
    <property type="match status" value="1"/>
</dbReference>
<dbReference type="InterPro" id="IPR044164">
    <property type="entry name" value="CFI"/>
</dbReference>
<dbReference type="InterPro" id="IPR016087">
    <property type="entry name" value="Chalcone_isomerase"/>
</dbReference>
<dbReference type="InterPro" id="IPR016088">
    <property type="entry name" value="Chalcone_isomerase_3-sand"/>
</dbReference>
<dbReference type="InterPro" id="IPR016089">
    <property type="entry name" value="Chalcone_isomerase_bundle_sf"/>
</dbReference>
<dbReference type="InterPro" id="IPR036298">
    <property type="entry name" value="Chalcone_isomerase_sf"/>
</dbReference>
<dbReference type="PANTHER" id="PTHR28039:SF8">
    <property type="entry name" value="CHALCONE--FLAVANONE ISOMERASE 1-RELATED"/>
    <property type="match status" value="1"/>
</dbReference>
<dbReference type="PANTHER" id="PTHR28039">
    <property type="entry name" value="CHALCONE--FLAVONONE ISOMERASE 1-RELATED"/>
    <property type="match status" value="1"/>
</dbReference>
<dbReference type="Pfam" id="PF02431">
    <property type="entry name" value="Chalcone"/>
    <property type="match status" value="1"/>
</dbReference>
<dbReference type="SUPFAM" id="SSF54626">
    <property type="entry name" value="Chalcone isomerase"/>
    <property type="match status" value="1"/>
</dbReference>
<reference key="1">
    <citation type="submission" date="2005-09" db="EMBL/GenBank/DDBJ databases">
        <title>Camellia sinensis cultivar UPASI-10 chalcone isomerase (CHI) mRNA.</title>
        <authorList>
            <person name="Rani A."/>
            <person name="Kumar S."/>
            <person name="Ahuja P.S."/>
        </authorList>
    </citation>
    <scope>NUCLEOTIDE SEQUENCE [MRNA]</scope>
    <source>
        <strain>cv. UPASI-10</strain>
    </source>
</reference>